<proteinExistence type="predicted"/>
<dbReference type="EMBL" id="AE000516">
    <property type="protein sequence ID" value="AAK47764.1"/>
    <property type="molecule type" value="Genomic_DNA"/>
</dbReference>
<dbReference type="PIR" id="H70843">
    <property type="entry name" value="H70843"/>
</dbReference>
<dbReference type="RefSeq" id="WP_003417286.1">
    <property type="nucleotide sequence ID" value="NZ_KK341227.1"/>
</dbReference>
<dbReference type="SMR" id="P9WJ16"/>
<dbReference type="KEGG" id="mtc:MT3422"/>
<dbReference type="PATRIC" id="fig|83331.31.peg.3681"/>
<dbReference type="HOGENOM" id="CLU_186849_0_0_11"/>
<dbReference type="Proteomes" id="UP000001020">
    <property type="component" value="Chromosome"/>
</dbReference>
<dbReference type="CDD" id="cd21631">
    <property type="entry name" value="RHH_CopG_NikR-like"/>
    <property type="match status" value="1"/>
</dbReference>
<protein>
    <recommendedName>
        <fullName>Putative antitoxin VapB44</fullName>
    </recommendedName>
</protein>
<sequence>MRTTLSIDDDVLLAVKERARREKRTAGEILSDLARQALTNQNPQPAASQEDAFHGFEPLPHRGGAVSNALIDRLRDEEAV</sequence>
<accession>P9WJ16</accession>
<accession>L0TDT2</accession>
<accession>O53373</accession>
<accession>Q7D5P9</accession>
<comment type="function">
    <text evidence="2">Possibly the antitoxin component of a type II toxin-antitoxin (TA) system. Its cognate toxin is VapC44 (Potential).</text>
</comment>
<gene>
    <name type="primary">vapB44</name>
    <name type="ordered locus">MT3422</name>
</gene>
<name>VPB44_MYCTO</name>
<keyword id="KW-1185">Reference proteome</keyword>
<keyword id="KW-1277">Toxin-antitoxin system</keyword>
<reference key="1">
    <citation type="journal article" date="2002" name="J. Bacteriol.">
        <title>Whole-genome comparison of Mycobacterium tuberculosis clinical and laboratory strains.</title>
        <authorList>
            <person name="Fleischmann R.D."/>
            <person name="Alland D."/>
            <person name="Eisen J.A."/>
            <person name="Carpenter L."/>
            <person name="White O."/>
            <person name="Peterson J.D."/>
            <person name="DeBoy R.T."/>
            <person name="Dodson R.J."/>
            <person name="Gwinn M.L."/>
            <person name="Haft D.H."/>
            <person name="Hickey E.K."/>
            <person name="Kolonay J.F."/>
            <person name="Nelson W.C."/>
            <person name="Umayam L.A."/>
            <person name="Ermolaeva M.D."/>
            <person name="Salzberg S.L."/>
            <person name="Delcher A."/>
            <person name="Utterback T.R."/>
            <person name="Weidman J.F."/>
            <person name="Khouri H.M."/>
            <person name="Gill J."/>
            <person name="Mikula A."/>
            <person name="Bishai W."/>
            <person name="Jacobs W.R. Jr."/>
            <person name="Venter J.C."/>
            <person name="Fraser C.M."/>
        </authorList>
    </citation>
    <scope>NUCLEOTIDE SEQUENCE [LARGE SCALE GENOMIC DNA]</scope>
    <source>
        <strain>CDC 1551 / Oshkosh</strain>
    </source>
</reference>
<feature type="chain" id="PRO_0000427908" description="Putative antitoxin VapB44">
    <location>
        <begin position="1"/>
        <end position="80"/>
    </location>
</feature>
<feature type="region of interest" description="Disordered" evidence="1">
    <location>
        <begin position="40"/>
        <end position="68"/>
    </location>
</feature>
<organism>
    <name type="scientific">Mycobacterium tuberculosis (strain CDC 1551 / Oshkosh)</name>
    <dbReference type="NCBI Taxonomy" id="83331"/>
    <lineage>
        <taxon>Bacteria</taxon>
        <taxon>Bacillati</taxon>
        <taxon>Actinomycetota</taxon>
        <taxon>Actinomycetes</taxon>
        <taxon>Mycobacteriales</taxon>
        <taxon>Mycobacteriaceae</taxon>
        <taxon>Mycobacterium</taxon>
        <taxon>Mycobacterium tuberculosis complex</taxon>
    </lineage>
</organism>
<evidence type="ECO:0000256" key="1">
    <source>
        <dbReference type="SAM" id="MobiDB-lite"/>
    </source>
</evidence>
<evidence type="ECO:0000305" key="2"/>